<reference key="1">
    <citation type="journal article" date="2007" name="Microbiology">
        <title>Comparative analysis of the Corynebacterium glutamicum group and complete genome sequence of strain R.</title>
        <authorList>
            <person name="Yukawa H."/>
            <person name="Omumasaba C.A."/>
            <person name="Nonaka H."/>
            <person name="Kos P."/>
            <person name="Okai N."/>
            <person name="Suzuki N."/>
            <person name="Suda M."/>
            <person name="Tsuge Y."/>
            <person name="Watanabe J."/>
            <person name="Ikeda Y."/>
            <person name="Vertes A.A."/>
            <person name="Inui M."/>
        </authorList>
    </citation>
    <scope>NUCLEOTIDE SEQUENCE [LARGE SCALE GENOMIC DNA]</scope>
    <source>
        <strain>R</strain>
    </source>
</reference>
<keyword id="KW-0240">DNA-directed RNA polymerase</keyword>
<keyword id="KW-0460">Magnesium</keyword>
<keyword id="KW-0479">Metal-binding</keyword>
<keyword id="KW-0548">Nucleotidyltransferase</keyword>
<keyword id="KW-0804">Transcription</keyword>
<keyword id="KW-0808">Transferase</keyword>
<keyword id="KW-0862">Zinc</keyword>
<organism>
    <name type="scientific">Corynebacterium glutamicum (strain R)</name>
    <dbReference type="NCBI Taxonomy" id="340322"/>
    <lineage>
        <taxon>Bacteria</taxon>
        <taxon>Bacillati</taxon>
        <taxon>Actinomycetota</taxon>
        <taxon>Actinomycetes</taxon>
        <taxon>Mycobacteriales</taxon>
        <taxon>Corynebacteriaceae</taxon>
        <taxon>Corynebacterium</taxon>
    </lineage>
</organism>
<comment type="function">
    <text evidence="1">DNA-dependent RNA polymerase catalyzes the transcription of DNA into RNA using the four ribonucleoside triphosphates as substrates.</text>
</comment>
<comment type="catalytic activity">
    <reaction evidence="1">
        <text>RNA(n) + a ribonucleoside 5'-triphosphate = RNA(n+1) + diphosphate</text>
        <dbReference type="Rhea" id="RHEA:21248"/>
        <dbReference type="Rhea" id="RHEA-COMP:14527"/>
        <dbReference type="Rhea" id="RHEA-COMP:17342"/>
        <dbReference type="ChEBI" id="CHEBI:33019"/>
        <dbReference type="ChEBI" id="CHEBI:61557"/>
        <dbReference type="ChEBI" id="CHEBI:140395"/>
        <dbReference type="EC" id="2.7.7.6"/>
    </reaction>
</comment>
<comment type="cofactor">
    <cofactor evidence="1">
        <name>Mg(2+)</name>
        <dbReference type="ChEBI" id="CHEBI:18420"/>
    </cofactor>
    <text evidence="1">Binds 1 Mg(2+) ion per subunit.</text>
</comment>
<comment type="cofactor">
    <cofactor evidence="1">
        <name>Zn(2+)</name>
        <dbReference type="ChEBI" id="CHEBI:29105"/>
    </cofactor>
    <text evidence="1">Binds 2 Zn(2+) ions per subunit.</text>
</comment>
<comment type="subunit">
    <text evidence="1">The RNAP catalytic core consists of 2 alpha, 1 beta, 1 beta' and 1 omega subunit. When a sigma factor is associated with the core the holoenzyme is formed, which can initiate transcription.</text>
</comment>
<comment type="similarity">
    <text evidence="1">Belongs to the RNA polymerase beta' chain family.</text>
</comment>
<gene>
    <name evidence="1" type="primary">rpoC</name>
    <name type="ordered locus">cgR_0592</name>
</gene>
<dbReference type="EC" id="2.7.7.6" evidence="1"/>
<dbReference type="EMBL" id="AP009044">
    <property type="protein sequence ID" value="BAF53560.1"/>
    <property type="molecule type" value="Genomic_DNA"/>
</dbReference>
<dbReference type="RefSeq" id="WP_003854213.1">
    <property type="nucleotide sequence ID" value="NC_009342.1"/>
</dbReference>
<dbReference type="SMR" id="A4QBG3"/>
<dbReference type="KEGG" id="cgt:cgR_0592"/>
<dbReference type="HOGENOM" id="CLU_000524_3_1_11"/>
<dbReference type="PhylomeDB" id="A4QBG3"/>
<dbReference type="Proteomes" id="UP000006698">
    <property type="component" value="Chromosome"/>
</dbReference>
<dbReference type="GO" id="GO:0000428">
    <property type="term" value="C:DNA-directed RNA polymerase complex"/>
    <property type="evidence" value="ECO:0007669"/>
    <property type="project" value="UniProtKB-KW"/>
</dbReference>
<dbReference type="GO" id="GO:0003677">
    <property type="term" value="F:DNA binding"/>
    <property type="evidence" value="ECO:0007669"/>
    <property type="project" value="UniProtKB-UniRule"/>
</dbReference>
<dbReference type="GO" id="GO:0003899">
    <property type="term" value="F:DNA-directed RNA polymerase activity"/>
    <property type="evidence" value="ECO:0007669"/>
    <property type="project" value="UniProtKB-UniRule"/>
</dbReference>
<dbReference type="GO" id="GO:0000287">
    <property type="term" value="F:magnesium ion binding"/>
    <property type="evidence" value="ECO:0007669"/>
    <property type="project" value="UniProtKB-UniRule"/>
</dbReference>
<dbReference type="GO" id="GO:0008270">
    <property type="term" value="F:zinc ion binding"/>
    <property type="evidence" value="ECO:0007669"/>
    <property type="project" value="UniProtKB-UniRule"/>
</dbReference>
<dbReference type="GO" id="GO:0006351">
    <property type="term" value="P:DNA-templated transcription"/>
    <property type="evidence" value="ECO:0007669"/>
    <property type="project" value="UniProtKB-UniRule"/>
</dbReference>
<dbReference type="CDD" id="cd02655">
    <property type="entry name" value="RNAP_beta'_C"/>
    <property type="match status" value="1"/>
</dbReference>
<dbReference type="CDD" id="cd01609">
    <property type="entry name" value="RNAP_beta'_N"/>
    <property type="match status" value="1"/>
</dbReference>
<dbReference type="FunFam" id="1.10.150.390:FF:000002">
    <property type="entry name" value="DNA-directed RNA polymerase subunit beta"/>
    <property type="match status" value="1"/>
</dbReference>
<dbReference type="FunFam" id="1.10.40.90:FF:000001">
    <property type="entry name" value="DNA-directed RNA polymerase subunit beta"/>
    <property type="match status" value="1"/>
</dbReference>
<dbReference type="FunFam" id="4.10.860.120:FF:000001">
    <property type="entry name" value="DNA-directed RNA polymerase subunit beta"/>
    <property type="match status" value="1"/>
</dbReference>
<dbReference type="Gene3D" id="1.10.132.30">
    <property type="match status" value="1"/>
</dbReference>
<dbReference type="Gene3D" id="1.10.150.390">
    <property type="match status" value="1"/>
</dbReference>
<dbReference type="Gene3D" id="1.10.1790.20">
    <property type="match status" value="1"/>
</dbReference>
<dbReference type="Gene3D" id="1.10.40.90">
    <property type="match status" value="1"/>
</dbReference>
<dbReference type="Gene3D" id="2.40.40.20">
    <property type="match status" value="1"/>
</dbReference>
<dbReference type="Gene3D" id="2.40.50.100">
    <property type="match status" value="1"/>
</dbReference>
<dbReference type="Gene3D" id="4.10.860.120">
    <property type="entry name" value="RNA polymerase II, clamp domain"/>
    <property type="match status" value="1"/>
</dbReference>
<dbReference type="Gene3D" id="1.10.274.100">
    <property type="entry name" value="RNA polymerase Rpb1, domain 3"/>
    <property type="match status" value="1"/>
</dbReference>
<dbReference type="HAMAP" id="MF_01322">
    <property type="entry name" value="RNApol_bact_RpoC"/>
    <property type="match status" value="1"/>
</dbReference>
<dbReference type="InterPro" id="IPR045867">
    <property type="entry name" value="DNA-dir_RpoC_beta_prime"/>
</dbReference>
<dbReference type="InterPro" id="IPR012754">
    <property type="entry name" value="DNA-dir_RpoC_beta_prime_bact"/>
</dbReference>
<dbReference type="InterPro" id="IPR000722">
    <property type="entry name" value="RNA_pol_asu"/>
</dbReference>
<dbReference type="InterPro" id="IPR006592">
    <property type="entry name" value="RNA_pol_N"/>
</dbReference>
<dbReference type="InterPro" id="IPR007080">
    <property type="entry name" value="RNA_pol_Rpb1_1"/>
</dbReference>
<dbReference type="InterPro" id="IPR007066">
    <property type="entry name" value="RNA_pol_Rpb1_3"/>
</dbReference>
<dbReference type="InterPro" id="IPR042102">
    <property type="entry name" value="RNA_pol_Rpb1_3_sf"/>
</dbReference>
<dbReference type="InterPro" id="IPR007081">
    <property type="entry name" value="RNA_pol_Rpb1_5"/>
</dbReference>
<dbReference type="InterPro" id="IPR044893">
    <property type="entry name" value="RNA_pol_Rpb1_clamp_domain"/>
</dbReference>
<dbReference type="InterPro" id="IPR038120">
    <property type="entry name" value="Rpb1_funnel_sf"/>
</dbReference>
<dbReference type="NCBIfam" id="NF011498">
    <property type="entry name" value="PRK14906.1"/>
    <property type="match status" value="1"/>
</dbReference>
<dbReference type="NCBIfam" id="TIGR02386">
    <property type="entry name" value="rpoC_TIGR"/>
    <property type="match status" value="1"/>
</dbReference>
<dbReference type="PANTHER" id="PTHR19376">
    <property type="entry name" value="DNA-DIRECTED RNA POLYMERASE"/>
    <property type="match status" value="1"/>
</dbReference>
<dbReference type="PANTHER" id="PTHR19376:SF54">
    <property type="entry name" value="DNA-DIRECTED RNA POLYMERASE SUBUNIT BETA"/>
    <property type="match status" value="1"/>
</dbReference>
<dbReference type="Pfam" id="PF04997">
    <property type="entry name" value="RNA_pol_Rpb1_1"/>
    <property type="match status" value="1"/>
</dbReference>
<dbReference type="Pfam" id="PF00623">
    <property type="entry name" value="RNA_pol_Rpb1_2"/>
    <property type="match status" value="1"/>
</dbReference>
<dbReference type="Pfam" id="PF04983">
    <property type="entry name" value="RNA_pol_Rpb1_3"/>
    <property type="match status" value="1"/>
</dbReference>
<dbReference type="Pfam" id="PF04998">
    <property type="entry name" value="RNA_pol_Rpb1_5"/>
    <property type="match status" value="1"/>
</dbReference>
<dbReference type="SMART" id="SM00663">
    <property type="entry name" value="RPOLA_N"/>
    <property type="match status" value="1"/>
</dbReference>
<dbReference type="SUPFAM" id="SSF64484">
    <property type="entry name" value="beta and beta-prime subunits of DNA dependent RNA-polymerase"/>
    <property type="match status" value="1"/>
</dbReference>
<name>RPOC_CORGB</name>
<feature type="chain" id="PRO_0000308830" description="DNA-directed RNA polymerase subunit beta'">
    <location>
        <begin position="1"/>
        <end position="1333"/>
    </location>
</feature>
<feature type="binding site" evidence="1">
    <location>
        <position position="60"/>
    </location>
    <ligand>
        <name>Zn(2+)</name>
        <dbReference type="ChEBI" id="CHEBI:29105"/>
        <label>1</label>
    </ligand>
</feature>
<feature type="binding site" evidence="1">
    <location>
        <position position="62"/>
    </location>
    <ligand>
        <name>Zn(2+)</name>
        <dbReference type="ChEBI" id="CHEBI:29105"/>
        <label>1</label>
    </ligand>
</feature>
<feature type="binding site" evidence="1">
    <location>
        <position position="75"/>
    </location>
    <ligand>
        <name>Zn(2+)</name>
        <dbReference type="ChEBI" id="CHEBI:29105"/>
        <label>1</label>
    </ligand>
</feature>
<feature type="binding site" evidence="1">
    <location>
        <position position="78"/>
    </location>
    <ligand>
        <name>Zn(2+)</name>
        <dbReference type="ChEBI" id="CHEBI:29105"/>
        <label>1</label>
    </ligand>
</feature>
<feature type="binding site" evidence="1">
    <location>
        <position position="535"/>
    </location>
    <ligand>
        <name>Mg(2+)</name>
        <dbReference type="ChEBI" id="CHEBI:18420"/>
    </ligand>
</feature>
<feature type="binding site" evidence="1">
    <location>
        <position position="537"/>
    </location>
    <ligand>
        <name>Mg(2+)</name>
        <dbReference type="ChEBI" id="CHEBI:18420"/>
    </ligand>
</feature>
<feature type="binding site" evidence="1">
    <location>
        <position position="539"/>
    </location>
    <ligand>
        <name>Mg(2+)</name>
        <dbReference type="ChEBI" id="CHEBI:18420"/>
    </ligand>
</feature>
<feature type="binding site" evidence="1">
    <location>
        <position position="901"/>
    </location>
    <ligand>
        <name>Zn(2+)</name>
        <dbReference type="ChEBI" id="CHEBI:29105"/>
        <label>2</label>
    </ligand>
</feature>
<feature type="binding site" evidence="1">
    <location>
        <position position="983"/>
    </location>
    <ligand>
        <name>Zn(2+)</name>
        <dbReference type="ChEBI" id="CHEBI:29105"/>
        <label>2</label>
    </ligand>
</feature>
<feature type="binding site" evidence="1">
    <location>
        <position position="990"/>
    </location>
    <ligand>
        <name>Zn(2+)</name>
        <dbReference type="ChEBI" id="CHEBI:29105"/>
        <label>2</label>
    </ligand>
</feature>
<feature type="binding site" evidence="1">
    <location>
        <position position="993"/>
    </location>
    <ligand>
        <name>Zn(2+)</name>
        <dbReference type="ChEBI" id="CHEBI:29105"/>
        <label>2</label>
    </ligand>
</feature>
<sequence length="1333" mass="147309">MLDVNVFDELRIGLATADDIRRWSKGEVKKPETINYRTLKPEKDGLFCERIFGPTRDWECACGKYKRVRYKGIICERCGVEVTKSKVRRERMGHIELAAPVTHIWYFKGVPSRLGYLLDLAPKDLDLIIYFGANIITSVDEEARHSDQTTLEAEMLLEKKDVEADAESDIAERAEKLEEDLAELEAAGAKADARRKVQAAADKEMQHIRERAQREIDRLDEVWQTFIKLAPKQMIRDEKLYDELIDRYEDYFTGGMGAESIEALIQNFDLDAEAEELRDIINNGKGQKKMRALKRLKVVAAFQRSGNDPAGMVLNAIPVIPPELRPMVQLDGGRFATSDLNDLYRRVINRNNRLKRMIELGAPEIIVNNEKRMLQESVDALFDNGRRGRPVTGPGNRPLKSLSDLLKGKQGRFRQNLLGKRVDYSGRSVIIVGPQLRLHECGLPKLMALELFKPFVMKRLVENEYAQNIKSAKRMVERQRPEVWDVLEEAISEHPVMLNRAPTLHRLGIQAFEPVLVEGKAIQLHPLACEAFNADFDGDQMAVHLPLSAEAQAEARVLMLASNNILSPASGKPLAMPRLDMVTGLYYLTLEKSSEEFGGQGAYQPADENGPEKGVYSSLAEAIMAYDRGVLGLQAPVRIRLNHLRPPAEVEAEQFPDGWNQGETWLAHTTLGRVMFNEILPWNYPYLEGIMVRKGGGSDKIMLGDVVNDLAAKYPMITVAQTMDKMKDAGFYWSTRSGVTIAMSDVLVLPNKEEMLDRYEESARQIEVKYNRGKLTGRERYDRLVELWKDATDEVGQAVEDLYPDDNPIPMIVKSGAAGNMRQIWTLAGMKGMVVNSKGDYITRPIKTSFREGLTVLEYFNNSHGSRKGLADTALRTADSGYLTRRLVDVAQDVIVRVEDCGTRQGVRVPVAAEVLDATGAVTGYTRHDLIETSVSGRVLAGDATNAAGEVVLAAGTDLTELNIDLLVEAGIKDVKVRSVLTCQTPTGVCAKCYGKSMASGQQVDIGEAVGIVAAQSIGEPGTQLTMRTFHQGGVGGDITGGLPRVQELFEARVPKNCAPIASVEGVIHLEDEGNFYTLTIVPDDGSDNVVYEKLSKRQGLASTRVAMESNAGAFIERTLTEGDRVTVGQRLLRGAADPHDVLEILGRRGVEQHLIDEVQAVYRAQGVAIHDKHIEIIIRQMLRRGTVIESGSTEFLPGSLVDLSEAKLANSEAIGAGGQPAELRSEIMGITKASLATESWLSAASFQETTRVLTDAAINKRSDKLIGLKENVIIGKLIPAGTGISRYRNISIKPTEAARNAAYSIPTYGESIYGDDGFGEFTGASVPLDEAF</sequence>
<proteinExistence type="inferred from homology"/>
<protein>
    <recommendedName>
        <fullName evidence="1">DNA-directed RNA polymerase subunit beta'</fullName>
        <shortName evidence="1">RNAP subunit beta'</shortName>
        <ecNumber evidence="1">2.7.7.6</ecNumber>
    </recommendedName>
    <alternativeName>
        <fullName evidence="1">RNA polymerase subunit beta'</fullName>
    </alternativeName>
    <alternativeName>
        <fullName evidence="1">Transcriptase subunit beta'</fullName>
    </alternativeName>
</protein>
<evidence type="ECO:0000255" key="1">
    <source>
        <dbReference type="HAMAP-Rule" id="MF_01322"/>
    </source>
</evidence>
<accession>A4QBG3</accession>